<sequence>MILFPAIDLKNGQCVRLEQGDMARATVFNLDPTAQAKSFAAQGFQYLHVVDLDGAFAGKPMNAQAVESMLKVVSMPVQLGGGIRDLATVEAWLSKGIARVIIGTAAVRDPALVKQAAKSFPGRVAVGLDARDGKVAVEGWAESSQVTALEIAQRFEDAGVAAIIFTDIARDGLLKGINWDATIALAEAISIPVIASGGLASIEDVKAMLSPRAHKLEGAIAGRALYDGRLDPAEALALIGAARAA</sequence>
<feature type="chain" id="PRO_0000290527" description="1-(5-phosphoribosyl)-5-[(5-phosphoribosylamino)methylideneamino] imidazole-4-carboxamide isomerase">
    <location>
        <begin position="1"/>
        <end position="245"/>
    </location>
</feature>
<feature type="active site" description="Proton acceptor" evidence="1">
    <location>
        <position position="8"/>
    </location>
</feature>
<feature type="active site" description="Proton donor" evidence="1">
    <location>
        <position position="129"/>
    </location>
</feature>
<name>HIS4_RHOP2</name>
<organism>
    <name type="scientific">Rhodopseudomonas palustris (strain HaA2)</name>
    <dbReference type="NCBI Taxonomy" id="316058"/>
    <lineage>
        <taxon>Bacteria</taxon>
        <taxon>Pseudomonadati</taxon>
        <taxon>Pseudomonadota</taxon>
        <taxon>Alphaproteobacteria</taxon>
        <taxon>Hyphomicrobiales</taxon>
        <taxon>Nitrobacteraceae</taxon>
        <taxon>Rhodopseudomonas</taxon>
    </lineage>
</organism>
<comment type="catalytic activity">
    <reaction evidence="1">
        <text>1-(5-phospho-beta-D-ribosyl)-5-[(5-phospho-beta-D-ribosylamino)methylideneamino]imidazole-4-carboxamide = 5-[(5-phospho-1-deoxy-D-ribulos-1-ylimino)methylamino]-1-(5-phospho-beta-D-ribosyl)imidazole-4-carboxamide</text>
        <dbReference type="Rhea" id="RHEA:15469"/>
        <dbReference type="ChEBI" id="CHEBI:58435"/>
        <dbReference type="ChEBI" id="CHEBI:58525"/>
        <dbReference type="EC" id="5.3.1.16"/>
    </reaction>
</comment>
<comment type="pathway">
    <text evidence="1">Amino-acid biosynthesis; L-histidine biosynthesis; L-histidine from 5-phospho-alpha-D-ribose 1-diphosphate: step 4/9.</text>
</comment>
<comment type="subcellular location">
    <subcellularLocation>
        <location evidence="1">Cytoplasm</location>
    </subcellularLocation>
</comment>
<comment type="similarity">
    <text evidence="1">Belongs to the HisA/HisF family.</text>
</comment>
<protein>
    <recommendedName>
        <fullName evidence="1">1-(5-phosphoribosyl)-5-[(5-phosphoribosylamino)methylideneamino] imidazole-4-carboxamide isomerase</fullName>
        <ecNumber evidence="1">5.3.1.16</ecNumber>
    </recommendedName>
    <alternativeName>
        <fullName evidence="1">Phosphoribosylformimino-5-aminoimidazole carboxamide ribotide isomerase</fullName>
    </alternativeName>
</protein>
<accession>Q2J341</accession>
<proteinExistence type="inferred from homology"/>
<keyword id="KW-0028">Amino-acid biosynthesis</keyword>
<keyword id="KW-0963">Cytoplasm</keyword>
<keyword id="KW-0368">Histidine biosynthesis</keyword>
<keyword id="KW-0413">Isomerase</keyword>
<keyword id="KW-1185">Reference proteome</keyword>
<evidence type="ECO:0000255" key="1">
    <source>
        <dbReference type="HAMAP-Rule" id="MF_01014"/>
    </source>
</evidence>
<dbReference type="EC" id="5.3.1.16" evidence="1"/>
<dbReference type="EMBL" id="CP000250">
    <property type="protein sequence ID" value="ABD05119.1"/>
    <property type="molecule type" value="Genomic_DNA"/>
</dbReference>
<dbReference type="RefSeq" id="WP_011439309.1">
    <property type="nucleotide sequence ID" value="NC_007778.1"/>
</dbReference>
<dbReference type="SMR" id="Q2J341"/>
<dbReference type="STRING" id="316058.RPB_0408"/>
<dbReference type="KEGG" id="rpb:RPB_0408"/>
<dbReference type="eggNOG" id="COG0106">
    <property type="taxonomic scope" value="Bacteria"/>
</dbReference>
<dbReference type="HOGENOM" id="CLU_048577_1_1_5"/>
<dbReference type="OrthoDB" id="9807749at2"/>
<dbReference type="UniPathway" id="UPA00031">
    <property type="reaction ID" value="UER00009"/>
</dbReference>
<dbReference type="Proteomes" id="UP000008809">
    <property type="component" value="Chromosome"/>
</dbReference>
<dbReference type="GO" id="GO:0005737">
    <property type="term" value="C:cytoplasm"/>
    <property type="evidence" value="ECO:0007669"/>
    <property type="project" value="UniProtKB-SubCell"/>
</dbReference>
<dbReference type="GO" id="GO:0003949">
    <property type="term" value="F:1-(5-phosphoribosyl)-5-[(5-phosphoribosylamino)methylideneamino]imidazole-4-carboxamide isomerase activity"/>
    <property type="evidence" value="ECO:0007669"/>
    <property type="project" value="UniProtKB-UniRule"/>
</dbReference>
<dbReference type="GO" id="GO:0000105">
    <property type="term" value="P:L-histidine biosynthetic process"/>
    <property type="evidence" value="ECO:0007669"/>
    <property type="project" value="UniProtKB-UniRule"/>
</dbReference>
<dbReference type="GO" id="GO:0000162">
    <property type="term" value="P:L-tryptophan biosynthetic process"/>
    <property type="evidence" value="ECO:0007669"/>
    <property type="project" value="TreeGrafter"/>
</dbReference>
<dbReference type="CDD" id="cd04732">
    <property type="entry name" value="HisA"/>
    <property type="match status" value="1"/>
</dbReference>
<dbReference type="FunFam" id="3.20.20.70:FF:000009">
    <property type="entry name" value="1-(5-phosphoribosyl)-5-[(5-phosphoribosylamino)methylideneamino] imidazole-4-carboxamide isomerase"/>
    <property type="match status" value="1"/>
</dbReference>
<dbReference type="Gene3D" id="3.20.20.70">
    <property type="entry name" value="Aldolase class I"/>
    <property type="match status" value="1"/>
</dbReference>
<dbReference type="HAMAP" id="MF_01014">
    <property type="entry name" value="HisA"/>
    <property type="match status" value="1"/>
</dbReference>
<dbReference type="InterPro" id="IPR013785">
    <property type="entry name" value="Aldolase_TIM"/>
</dbReference>
<dbReference type="InterPro" id="IPR006062">
    <property type="entry name" value="His_biosynth"/>
</dbReference>
<dbReference type="InterPro" id="IPR006063">
    <property type="entry name" value="HisA_bact_arch"/>
</dbReference>
<dbReference type="InterPro" id="IPR044524">
    <property type="entry name" value="Isoase_HisA-like"/>
</dbReference>
<dbReference type="InterPro" id="IPR023016">
    <property type="entry name" value="Isoase_HisA-like_bact"/>
</dbReference>
<dbReference type="InterPro" id="IPR011060">
    <property type="entry name" value="RibuloseP-bd_barrel"/>
</dbReference>
<dbReference type="NCBIfam" id="TIGR00007">
    <property type="entry name" value="1-(5-phosphoribosyl)-5-[(5-phosphoribosylamino)methylideneamino]imidazole-4-carboxamide isomerase"/>
    <property type="match status" value="1"/>
</dbReference>
<dbReference type="NCBIfam" id="NF010112">
    <property type="entry name" value="PRK13585.1"/>
    <property type="match status" value="1"/>
</dbReference>
<dbReference type="PANTHER" id="PTHR43090">
    <property type="entry name" value="1-(5-PHOSPHORIBOSYL)-5-[(5-PHOSPHORIBOSYLAMINO)METHYLIDENEAMINO] IMIDAZOLE-4-CARBOXAMIDE ISOMERASE"/>
    <property type="match status" value="1"/>
</dbReference>
<dbReference type="PANTHER" id="PTHR43090:SF2">
    <property type="entry name" value="1-(5-PHOSPHORIBOSYL)-5-[(5-PHOSPHORIBOSYLAMINO)METHYLIDENEAMINO] IMIDAZOLE-4-CARBOXAMIDE ISOMERASE"/>
    <property type="match status" value="1"/>
</dbReference>
<dbReference type="Pfam" id="PF00977">
    <property type="entry name" value="His_biosynth"/>
    <property type="match status" value="1"/>
</dbReference>
<dbReference type="SUPFAM" id="SSF51366">
    <property type="entry name" value="Ribulose-phoshate binding barrel"/>
    <property type="match status" value="1"/>
</dbReference>
<reference key="1">
    <citation type="submission" date="2006-01" db="EMBL/GenBank/DDBJ databases">
        <title>Complete sequence of Rhodopseudomonas palustris HaA2.</title>
        <authorList>
            <consortium name="US DOE Joint Genome Institute"/>
            <person name="Copeland A."/>
            <person name="Lucas S."/>
            <person name="Lapidus A."/>
            <person name="Barry K."/>
            <person name="Detter J.C."/>
            <person name="Glavina T."/>
            <person name="Hammon N."/>
            <person name="Israni S."/>
            <person name="Pitluck S."/>
            <person name="Chain P."/>
            <person name="Malfatti S."/>
            <person name="Shin M."/>
            <person name="Vergez L."/>
            <person name="Schmutz J."/>
            <person name="Larimer F."/>
            <person name="Land M."/>
            <person name="Hauser L."/>
            <person name="Pelletier D.A."/>
            <person name="Kyrpides N."/>
            <person name="Anderson I."/>
            <person name="Oda Y."/>
            <person name="Harwood C.S."/>
            <person name="Richardson P."/>
        </authorList>
    </citation>
    <scope>NUCLEOTIDE SEQUENCE [LARGE SCALE GENOMIC DNA]</scope>
    <source>
        <strain>HaA2</strain>
    </source>
</reference>
<gene>
    <name evidence="1" type="primary">hisA</name>
    <name type="ordered locus">RPB_0408</name>
</gene>